<keyword id="KW-1185">Reference proteome</keyword>
<keyword id="KW-0804">Transcription</keyword>
<keyword id="KW-0889">Transcription antitermination</keyword>
<keyword id="KW-0805">Transcription regulation</keyword>
<keyword id="KW-0806">Transcription termination</keyword>
<organism>
    <name type="scientific">Mycobacterium leprae (strain TN)</name>
    <dbReference type="NCBI Taxonomy" id="272631"/>
    <lineage>
        <taxon>Bacteria</taxon>
        <taxon>Bacillati</taxon>
        <taxon>Actinomycetota</taxon>
        <taxon>Actinomycetes</taxon>
        <taxon>Mycobacteriales</taxon>
        <taxon>Mycobacteriaceae</taxon>
        <taxon>Mycobacterium</taxon>
    </lineage>
</organism>
<reference key="1">
    <citation type="journal article" date="2001" name="Nature">
        <title>Massive gene decay in the leprosy bacillus.</title>
        <authorList>
            <person name="Cole S.T."/>
            <person name="Eiglmeier K."/>
            <person name="Parkhill J."/>
            <person name="James K.D."/>
            <person name="Thomson N.R."/>
            <person name="Wheeler P.R."/>
            <person name="Honore N."/>
            <person name="Garnier T."/>
            <person name="Churcher C.M."/>
            <person name="Harris D.E."/>
            <person name="Mungall K.L."/>
            <person name="Basham D."/>
            <person name="Brown D."/>
            <person name="Chillingworth T."/>
            <person name="Connor R."/>
            <person name="Davies R.M."/>
            <person name="Devlin K."/>
            <person name="Duthoy S."/>
            <person name="Feltwell T."/>
            <person name="Fraser A."/>
            <person name="Hamlin N."/>
            <person name="Holroyd S."/>
            <person name="Hornsby T."/>
            <person name="Jagels K."/>
            <person name="Lacroix C."/>
            <person name="Maclean J."/>
            <person name="Moule S."/>
            <person name="Murphy L.D."/>
            <person name="Oliver K."/>
            <person name="Quail M.A."/>
            <person name="Rajandream M.A."/>
            <person name="Rutherford K.M."/>
            <person name="Rutter S."/>
            <person name="Seeger K."/>
            <person name="Simon S."/>
            <person name="Simmonds M."/>
            <person name="Skelton J."/>
            <person name="Squares R."/>
            <person name="Squares S."/>
            <person name="Stevens K."/>
            <person name="Taylor K."/>
            <person name="Whitehead S."/>
            <person name="Woodward J.R."/>
            <person name="Barrell B.G."/>
        </authorList>
    </citation>
    <scope>NUCLEOTIDE SEQUENCE [LARGE SCALE GENOMIC DNA]</scope>
    <source>
        <strain>TN</strain>
    </source>
</reference>
<accession>Q9CBK0</accession>
<dbReference type="EMBL" id="AL583923">
    <property type="protein sequence ID" value="CAC30860.1"/>
    <property type="molecule type" value="Genomic_DNA"/>
</dbReference>
<dbReference type="PIR" id="D87147">
    <property type="entry name" value="D87147"/>
</dbReference>
<dbReference type="RefSeq" id="NP_302283.1">
    <property type="nucleotide sequence ID" value="NC_002677.1"/>
</dbReference>
<dbReference type="SMR" id="Q9CBK0"/>
<dbReference type="STRING" id="272631.gene:17575754"/>
<dbReference type="KEGG" id="mle:ML1906"/>
<dbReference type="PATRIC" id="fig|272631.5.peg.3614"/>
<dbReference type="Leproma" id="ML1906"/>
<dbReference type="eggNOG" id="COG0250">
    <property type="taxonomic scope" value="Bacteria"/>
</dbReference>
<dbReference type="HOGENOM" id="CLU_067287_0_2_11"/>
<dbReference type="OrthoDB" id="9809075at2"/>
<dbReference type="Proteomes" id="UP000000806">
    <property type="component" value="Chromosome"/>
</dbReference>
<dbReference type="GO" id="GO:0005829">
    <property type="term" value="C:cytosol"/>
    <property type="evidence" value="ECO:0007669"/>
    <property type="project" value="TreeGrafter"/>
</dbReference>
<dbReference type="GO" id="GO:0006353">
    <property type="term" value="P:DNA-templated transcription termination"/>
    <property type="evidence" value="ECO:0007669"/>
    <property type="project" value="UniProtKB-UniRule"/>
</dbReference>
<dbReference type="GO" id="GO:0032784">
    <property type="term" value="P:regulation of DNA-templated transcription elongation"/>
    <property type="evidence" value="ECO:0007669"/>
    <property type="project" value="InterPro"/>
</dbReference>
<dbReference type="GO" id="GO:0031564">
    <property type="term" value="P:transcription antitermination"/>
    <property type="evidence" value="ECO:0007669"/>
    <property type="project" value="UniProtKB-UniRule"/>
</dbReference>
<dbReference type="GO" id="GO:0140673">
    <property type="term" value="P:transcription elongation-coupled chromatin remodeling"/>
    <property type="evidence" value="ECO:0007669"/>
    <property type="project" value="InterPro"/>
</dbReference>
<dbReference type="CDD" id="cd06091">
    <property type="entry name" value="KOW_NusG"/>
    <property type="match status" value="1"/>
</dbReference>
<dbReference type="CDD" id="cd09891">
    <property type="entry name" value="NGN_Bact_1"/>
    <property type="match status" value="1"/>
</dbReference>
<dbReference type="FunFam" id="2.30.30.30:FF:000002">
    <property type="entry name" value="Transcription termination/antitermination factor NusG"/>
    <property type="match status" value="1"/>
</dbReference>
<dbReference type="FunFam" id="3.30.70.940:FF:000002">
    <property type="entry name" value="Transcription termination/antitermination protein NusG"/>
    <property type="match status" value="1"/>
</dbReference>
<dbReference type="Gene3D" id="2.30.30.30">
    <property type="match status" value="1"/>
</dbReference>
<dbReference type="Gene3D" id="3.30.70.940">
    <property type="entry name" value="NusG, N-terminal domain"/>
    <property type="match status" value="1"/>
</dbReference>
<dbReference type="HAMAP" id="MF_00948">
    <property type="entry name" value="NusG"/>
    <property type="match status" value="1"/>
</dbReference>
<dbReference type="InterPro" id="IPR047050">
    <property type="entry name" value="NGN"/>
</dbReference>
<dbReference type="InterPro" id="IPR006645">
    <property type="entry name" value="NGN-like_dom"/>
</dbReference>
<dbReference type="InterPro" id="IPR036735">
    <property type="entry name" value="NGN_dom_sf"/>
</dbReference>
<dbReference type="InterPro" id="IPR043425">
    <property type="entry name" value="NusG-like"/>
</dbReference>
<dbReference type="InterPro" id="IPR014722">
    <property type="entry name" value="Rib_uL2_dom2"/>
</dbReference>
<dbReference type="InterPro" id="IPR001062">
    <property type="entry name" value="Transcrpt_antiterm_NusG"/>
</dbReference>
<dbReference type="InterPro" id="IPR015869">
    <property type="entry name" value="Transcrpt_antiterm_NusG_bac_CS"/>
</dbReference>
<dbReference type="InterPro" id="IPR008991">
    <property type="entry name" value="Translation_prot_SH3-like_sf"/>
</dbReference>
<dbReference type="NCBIfam" id="TIGR00922">
    <property type="entry name" value="nusG"/>
    <property type="match status" value="1"/>
</dbReference>
<dbReference type="PANTHER" id="PTHR30265">
    <property type="entry name" value="RHO-INTERACTING TRANSCRIPTION TERMINATION FACTOR NUSG"/>
    <property type="match status" value="1"/>
</dbReference>
<dbReference type="PANTHER" id="PTHR30265:SF2">
    <property type="entry name" value="TRANSCRIPTION TERMINATION_ANTITERMINATION PROTEIN NUSG"/>
    <property type="match status" value="1"/>
</dbReference>
<dbReference type="Pfam" id="PF02357">
    <property type="entry name" value="NusG"/>
    <property type="match status" value="1"/>
</dbReference>
<dbReference type="PRINTS" id="PR00338">
    <property type="entry name" value="NUSGTNSCPFCT"/>
</dbReference>
<dbReference type="SMART" id="SM00738">
    <property type="entry name" value="NGN"/>
    <property type="match status" value="1"/>
</dbReference>
<dbReference type="SUPFAM" id="SSF82679">
    <property type="entry name" value="N-utilization substance G protein NusG, N-terminal domain"/>
    <property type="match status" value="1"/>
</dbReference>
<dbReference type="SUPFAM" id="SSF50104">
    <property type="entry name" value="Translation proteins SH3-like domain"/>
    <property type="match status" value="1"/>
</dbReference>
<dbReference type="PROSITE" id="PS01014">
    <property type="entry name" value="NUSG"/>
    <property type="match status" value="1"/>
</dbReference>
<sequence length="228" mass="24347">MQEAGIDEFAAGGGHVEPAAEVDPAAALKAELRSKPGDWYVIHSYAGYENKVKANLETRVQNLDVGDCIFQVEVPTEEVTEIKNGQRRLVNRKVLPGYILVRMDLTDDSWAAVRNTPGVTGFVGATSRPSALALDDVVKFLLPSGSAKKDAKGAVSTAAAAEAGGLERSIIEVDYEVGESVTVMDGPFATLPATISEVNAEQQKLKVLVSIFGRETPVELTFSQVSKI</sequence>
<name>NUSG_MYCLE</name>
<feature type="chain" id="PRO_0000113935" description="Transcription termination/antitermination protein NusG">
    <location>
        <begin position="1"/>
        <end position="228"/>
    </location>
</feature>
<proteinExistence type="inferred from homology"/>
<gene>
    <name evidence="1" type="primary">nusG</name>
    <name type="ordered locus">ML1906</name>
</gene>
<comment type="function">
    <text evidence="1">Participates in transcription elongation, termination and antitermination.</text>
</comment>
<comment type="similarity">
    <text evidence="1">Belongs to the NusG family.</text>
</comment>
<evidence type="ECO:0000255" key="1">
    <source>
        <dbReference type="HAMAP-Rule" id="MF_00948"/>
    </source>
</evidence>
<protein>
    <recommendedName>
        <fullName evidence="1">Transcription termination/antitermination protein NusG</fullName>
    </recommendedName>
</protein>